<dbReference type="EC" id="6.3.5.7" evidence="1"/>
<dbReference type="EMBL" id="AL591688">
    <property type="protein sequence ID" value="CAC45891.1"/>
    <property type="molecule type" value="Genomic_DNA"/>
</dbReference>
<dbReference type="RefSeq" id="NP_385418.1">
    <property type="nucleotide sequence ID" value="NC_003047.1"/>
</dbReference>
<dbReference type="RefSeq" id="WP_010969173.1">
    <property type="nucleotide sequence ID" value="NC_003047.1"/>
</dbReference>
<dbReference type="SMR" id="Q92QK7"/>
<dbReference type="EnsemblBacteria" id="CAC45891">
    <property type="protein sequence ID" value="CAC45891"/>
    <property type="gene ID" value="SMc01352"/>
</dbReference>
<dbReference type="KEGG" id="sme:SMc01352"/>
<dbReference type="PATRIC" id="fig|266834.11.peg.2726"/>
<dbReference type="eggNOG" id="COG0154">
    <property type="taxonomic scope" value="Bacteria"/>
</dbReference>
<dbReference type="HOGENOM" id="CLU_009600_0_3_5"/>
<dbReference type="OrthoDB" id="9811471at2"/>
<dbReference type="Proteomes" id="UP000001976">
    <property type="component" value="Chromosome"/>
</dbReference>
<dbReference type="GO" id="GO:0030956">
    <property type="term" value="C:glutamyl-tRNA(Gln) amidotransferase complex"/>
    <property type="evidence" value="ECO:0007669"/>
    <property type="project" value="InterPro"/>
</dbReference>
<dbReference type="GO" id="GO:0005524">
    <property type="term" value="F:ATP binding"/>
    <property type="evidence" value="ECO:0007669"/>
    <property type="project" value="UniProtKB-KW"/>
</dbReference>
<dbReference type="GO" id="GO:0050567">
    <property type="term" value="F:glutaminyl-tRNA synthase (glutamine-hydrolyzing) activity"/>
    <property type="evidence" value="ECO:0007669"/>
    <property type="project" value="UniProtKB-UniRule"/>
</dbReference>
<dbReference type="GO" id="GO:0006412">
    <property type="term" value="P:translation"/>
    <property type="evidence" value="ECO:0007669"/>
    <property type="project" value="UniProtKB-UniRule"/>
</dbReference>
<dbReference type="Gene3D" id="3.90.1300.10">
    <property type="entry name" value="Amidase signature (AS) domain"/>
    <property type="match status" value="1"/>
</dbReference>
<dbReference type="HAMAP" id="MF_00120">
    <property type="entry name" value="GatA"/>
    <property type="match status" value="1"/>
</dbReference>
<dbReference type="InterPro" id="IPR000120">
    <property type="entry name" value="Amidase"/>
</dbReference>
<dbReference type="InterPro" id="IPR020556">
    <property type="entry name" value="Amidase_CS"/>
</dbReference>
<dbReference type="InterPro" id="IPR023631">
    <property type="entry name" value="Amidase_dom"/>
</dbReference>
<dbReference type="InterPro" id="IPR036928">
    <property type="entry name" value="AS_sf"/>
</dbReference>
<dbReference type="InterPro" id="IPR004412">
    <property type="entry name" value="GatA"/>
</dbReference>
<dbReference type="NCBIfam" id="TIGR00132">
    <property type="entry name" value="gatA"/>
    <property type="match status" value="1"/>
</dbReference>
<dbReference type="PANTHER" id="PTHR11895:SF151">
    <property type="entry name" value="GLUTAMYL-TRNA(GLN) AMIDOTRANSFERASE SUBUNIT A"/>
    <property type="match status" value="1"/>
</dbReference>
<dbReference type="PANTHER" id="PTHR11895">
    <property type="entry name" value="TRANSAMIDASE"/>
    <property type="match status" value="1"/>
</dbReference>
<dbReference type="Pfam" id="PF01425">
    <property type="entry name" value="Amidase"/>
    <property type="match status" value="1"/>
</dbReference>
<dbReference type="SUPFAM" id="SSF75304">
    <property type="entry name" value="Amidase signature (AS) enzymes"/>
    <property type="match status" value="1"/>
</dbReference>
<dbReference type="PROSITE" id="PS00571">
    <property type="entry name" value="AMIDASES"/>
    <property type="match status" value="1"/>
</dbReference>
<name>GATA_RHIME</name>
<evidence type="ECO:0000255" key="1">
    <source>
        <dbReference type="HAMAP-Rule" id="MF_00120"/>
    </source>
</evidence>
<protein>
    <recommendedName>
        <fullName evidence="1">Glutamyl-tRNA(Gln) amidotransferase subunit A</fullName>
        <shortName evidence="1">Glu-ADT subunit A</shortName>
        <ecNumber evidence="1">6.3.5.7</ecNumber>
    </recommendedName>
</protein>
<organism>
    <name type="scientific">Rhizobium meliloti (strain 1021)</name>
    <name type="common">Ensifer meliloti</name>
    <name type="synonym">Sinorhizobium meliloti</name>
    <dbReference type="NCBI Taxonomy" id="266834"/>
    <lineage>
        <taxon>Bacteria</taxon>
        <taxon>Pseudomonadati</taxon>
        <taxon>Pseudomonadota</taxon>
        <taxon>Alphaproteobacteria</taxon>
        <taxon>Hyphomicrobiales</taxon>
        <taxon>Rhizobiaceae</taxon>
        <taxon>Sinorhizobium/Ensifer group</taxon>
        <taxon>Sinorhizobium</taxon>
    </lineage>
</organism>
<sequence length="493" mass="52655">MTDLTSLTIAEARAKLSAKEITAVELTDAYLGAIEAANETINAYVAVTPEKAREMAKASDARIAAGNAAALEGIPLGIKDLFGTEGIHTQACSHILDGFEPRYESTVTQNLWNDGAVMLGKLNMDEFAMGSSNETSYYGPVKNPWRAKGSNLDLVPGGSSGGSAAAVAARLCAGATATDTGGSIRQPAAFTGTVGIKPTYGRCSRWGVVAFASSLDQAGPIARDVRDAAILLKSMASIDPKDTTSVDLPVPDYEAAIGQSIKGMRIGIPKEYRVDGMPEDIEALWQQGIAWLRDAGAEIVDISLPHTKYALPAYYIVAPAEASSNLARYDGVRYGLRVDGKDIIDMYEKTRAAGFGQEVKRRIMIGTYVLSAGYYDAYYLRAQKVRTLIKRDFELAFQAGVDAILTPATPSSAFGIADEDLASDPVKMYLNDIFTVTVNMAGLPGIAVPGGLDRKGLPLGLQLIGKPFEEETLFKTAHVIEQAAGRFTASKWW</sequence>
<comment type="function">
    <text evidence="1">Allows the formation of correctly charged Gln-tRNA(Gln) through the transamidation of misacylated Glu-tRNA(Gln) in organisms which lack glutaminyl-tRNA synthetase. The reaction takes place in the presence of glutamine and ATP through an activated gamma-phospho-Glu-tRNA(Gln).</text>
</comment>
<comment type="catalytic activity">
    <reaction evidence="1">
        <text>L-glutamyl-tRNA(Gln) + L-glutamine + ATP + H2O = L-glutaminyl-tRNA(Gln) + L-glutamate + ADP + phosphate + H(+)</text>
        <dbReference type="Rhea" id="RHEA:17521"/>
        <dbReference type="Rhea" id="RHEA-COMP:9681"/>
        <dbReference type="Rhea" id="RHEA-COMP:9684"/>
        <dbReference type="ChEBI" id="CHEBI:15377"/>
        <dbReference type="ChEBI" id="CHEBI:15378"/>
        <dbReference type="ChEBI" id="CHEBI:29985"/>
        <dbReference type="ChEBI" id="CHEBI:30616"/>
        <dbReference type="ChEBI" id="CHEBI:43474"/>
        <dbReference type="ChEBI" id="CHEBI:58359"/>
        <dbReference type="ChEBI" id="CHEBI:78520"/>
        <dbReference type="ChEBI" id="CHEBI:78521"/>
        <dbReference type="ChEBI" id="CHEBI:456216"/>
        <dbReference type="EC" id="6.3.5.7"/>
    </reaction>
</comment>
<comment type="subunit">
    <text evidence="1">Heterotrimer of A, B and C subunits.</text>
</comment>
<comment type="similarity">
    <text evidence="1">Belongs to the amidase family. GatA subfamily.</text>
</comment>
<accession>Q92QK7</accession>
<keyword id="KW-0067">ATP-binding</keyword>
<keyword id="KW-0436">Ligase</keyword>
<keyword id="KW-0547">Nucleotide-binding</keyword>
<keyword id="KW-0648">Protein biosynthesis</keyword>
<keyword id="KW-1185">Reference proteome</keyword>
<feature type="chain" id="PRO_0000105194" description="Glutamyl-tRNA(Gln) amidotransferase subunit A">
    <location>
        <begin position="1"/>
        <end position="493"/>
    </location>
</feature>
<feature type="active site" description="Charge relay system" evidence="1">
    <location>
        <position position="79"/>
    </location>
</feature>
<feature type="active site" description="Charge relay system" evidence="1">
    <location>
        <position position="159"/>
    </location>
</feature>
<feature type="active site" description="Acyl-ester intermediate" evidence="1">
    <location>
        <position position="183"/>
    </location>
</feature>
<gene>
    <name evidence="1" type="primary">gatA</name>
    <name type="ordered locus">R01312</name>
    <name type="ORF">SMc01352</name>
</gene>
<reference key="1">
    <citation type="journal article" date="2001" name="Proc. Natl. Acad. Sci. U.S.A.">
        <title>Analysis of the chromosome sequence of the legume symbiont Sinorhizobium meliloti strain 1021.</title>
        <authorList>
            <person name="Capela D."/>
            <person name="Barloy-Hubler F."/>
            <person name="Gouzy J."/>
            <person name="Bothe G."/>
            <person name="Ampe F."/>
            <person name="Batut J."/>
            <person name="Boistard P."/>
            <person name="Becker A."/>
            <person name="Boutry M."/>
            <person name="Cadieu E."/>
            <person name="Dreano S."/>
            <person name="Gloux S."/>
            <person name="Godrie T."/>
            <person name="Goffeau A."/>
            <person name="Kahn D."/>
            <person name="Kiss E."/>
            <person name="Lelaure V."/>
            <person name="Masuy D."/>
            <person name="Pohl T."/>
            <person name="Portetelle D."/>
            <person name="Puehler A."/>
            <person name="Purnelle B."/>
            <person name="Ramsperger U."/>
            <person name="Renard C."/>
            <person name="Thebault P."/>
            <person name="Vandenbol M."/>
            <person name="Weidner S."/>
            <person name="Galibert F."/>
        </authorList>
    </citation>
    <scope>NUCLEOTIDE SEQUENCE [LARGE SCALE GENOMIC DNA]</scope>
    <source>
        <strain>1021</strain>
    </source>
</reference>
<reference key="2">
    <citation type="journal article" date="2001" name="Science">
        <title>The composite genome of the legume symbiont Sinorhizobium meliloti.</title>
        <authorList>
            <person name="Galibert F."/>
            <person name="Finan T.M."/>
            <person name="Long S.R."/>
            <person name="Puehler A."/>
            <person name="Abola P."/>
            <person name="Ampe F."/>
            <person name="Barloy-Hubler F."/>
            <person name="Barnett M.J."/>
            <person name="Becker A."/>
            <person name="Boistard P."/>
            <person name="Bothe G."/>
            <person name="Boutry M."/>
            <person name="Bowser L."/>
            <person name="Buhrmester J."/>
            <person name="Cadieu E."/>
            <person name="Capela D."/>
            <person name="Chain P."/>
            <person name="Cowie A."/>
            <person name="Davis R.W."/>
            <person name="Dreano S."/>
            <person name="Federspiel N.A."/>
            <person name="Fisher R.F."/>
            <person name="Gloux S."/>
            <person name="Godrie T."/>
            <person name="Goffeau A."/>
            <person name="Golding B."/>
            <person name="Gouzy J."/>
            <person name="Gurjal M."/>
            <person name="Hernandez-Lucas I."/>
            <person name="Hong A."/>
            <person name="Huizar L."/>
            <person name="Hyman R.W."/>
            <person name="Jones T."/>
            <person name="Kahn D."/>
            <person name="Kahn M.L."/>
            <person name="Kalman S."/>
            <person name="Keating D.H."/>
            <person name="Kiss E."/>
            <person name="Komp C."/>
            <person name="Lelaure V."/>
            <person name="Masuy D."/>
            <person name="Palm C."/>
            <person name="Peck M.C."/>
            <person name="Pohl T.M."/>
            <person name="Portetelle D."/>
            <person name="Purnelle B."/>
            <person name="Ramsperger U."/>
            <person name="Surzycki R."/>
            <person name="Thebault P."/>
            <person name="Vandenbol M."/>
            <person name="Vorhoelter F.J."/>
            <person name="Weidner S."/>
            <person name="Wells D.H."/>
            <person name="Wong K."/>
            <person name="Yeh K.-C."/>
            <person name="Batut J."/>
        </authorList>
    </citation>
    <scope>NUCLEOTIDE SEQUENCE [LARGE SCALE GENOMIC DNA]</scope>
    <source>
        <strain>1021</strain>
    </source>
</reference>
<proteinExistence type="inferred from homology"/>